<accession>P86555</accession>
<dbReference type="GO" id="GO:0005576">
    <property type="term" value="C:extracellular region"/>
    <property type="evidence" value="ECO:0000250"/>
    <property type="project" value="UniProtKB"/>
</dbReference>
<dbReference type="GO" id="GO:0007218">
    <property type="term" value="P:neuropeptide signaling pathway"/>
    <property type="evidence" value="ECO:0007669"/>
    <property type="project" value="UniProtKB-KW"/>
</dbReference>
<feature type="peptide" id="PRO_0000395625" description="Allatotropin-related peptide" evidence="2">
    <location>
        <begin position="1"/>
        <end position="13"/>
    </location>
</feature>
<feature type="modified residue" description="Phenylalanine amide" evidence="2">
    <location>
        <position position="13"/>
    </location>
</feature>
<proteinExistence type="evidence at protein level"/>
<evidence type="ECO:0000250" key="1">
    <source>
        <dbReference type="UniProtKB" id="P21786"/>
    </source>
</evidence>
<evidence type="ECO:0000269" key="2">
    <source>
    </source>
</evidence>
<evidence type="ECO:0000303" key="3">
    <source>
    </source>
</evidence>
<evidence type="ECO:0000305" key="4"/>
<keyword id="KW-0027">Amidation</keyword>
<keyword id="KW-0903">Direct protein sequencing</keyword>
<keyword id="KW-0527">Neuropeptide</keyword>
<keyword id="KW-0964">Secreted</keyword>
<reference evidence="4" key="1">
    <citation type="journal article" date="2009" name="Peptides">
        <title>Neuropeptides in Heteroptera: identification of allatotropin-related peptide and tachykinin-related peptides using MALDI-TOF mass spectrometry.</title>
        <authorList>
            <person name="Neupert S."/>
            <person name="Russell W.K."/>
            <person name="Russell D.H."/>
            <person name="Lopez J.D. Jr."/>
            <person name="Predel R."/>
            <person name="Nachman R.J."/>
        </authorList>
    </citation>
    <scope>PROTEIN SEQUENCE</scope>
    <scope>TISSUE SPECIFICITY</scope>
    <scope>MASS SPECTROMETRY</scope>
    <scope>AMIDATION AT PHE-13</scope>
    <source>
        <tissue evidence="2">Ventral nerve cord</tissue>
    </source>
</reference>
<comment type="subcellular location">
    <subcellularLocation>
        <location evidence="1">Secreted</location>
    </subcellularLocation>
</comment>
<comment type="tissue specificity">
    <text evidence="2">Expressed in the posterior region of the abdominal ventral nerve cord and in the fourth abdominal nerves (at protein level).</text>
</comment>
<comment type="mass spectrometry" mass="1366.8" method="MALDI" evidence="2"/>
<protein>
    <recommendedName>
        <fullName evidence="3">Allatotropin-related peptide</fullName>
        <shortName evidence="3">ATRP</shortName>
    </recommendedName>
</protein>
<sequence length="13" mass="1368">GFKNVALSTARGF</sequence>
<name>ALLTR_PYRAP</name>
<organism>
    <name type="scientific">Pyrrhocoris apterus</name>
    <name type="common">Sap sucking bug</name>
    <name type="synonym">Cimex apterus</name>
    <dbReference type="NCBI Taxonomy" id="37000"/>
    <lineage>
        <taxon>Eukaryota</taxon>
        <taxon>Metazoa</taxon>
        <taxon>Ecdysozoa</taxon>
        <taxon>Arthropoda</taxon>
        <taxon>Hexapoda</taxon>
        <taxon>Insecta</taxon>
        <taxon>Pterygota</taxon>
        <taxon>Neoptera</taxon>
        <taxon>Paraneoptera</taxon>
        <taxon>Hemiptera</taxon>
        <taxon>Heteroptera</taxon>
        <taxon>Panheteroptera</taxon>
        <taxon>Pentatomomorpha</taxon>
        <taxon>Pyrrhocoroidea</taxon>
        <taxon>Pyrrhocoridae</taxon>
        <taxon>Pyrrhocoris</taxon>
    </lineage>
</organism>